<feature type="chain" id="PRO_0000168752" description="Uncharacterized protein YbjX">
    <location>
        <begin position="1"/>
        <end position="330"/>
    </location>
</feature>
<dbReference type="EMBL" id="U00096">
    <property type="protein sequence ID" value="AAC73964.1"/>
    <property type="molecule type" value="Genomic_DNA"/>
</dbReference>
<dbReference type="EMBL" id="AP009048">
    <property type="protein sequence ID" value="BAA35595.1"/>
    <property type="molecule type" value="Genomic_DNA"/>
</dbReference>
<dbReference type="PIR" id="E64826">
    <property type="entry name" value="E64826"/>
</dbReference>
<dbReference type="RefSeq" id="NP_415398.1">
    <property type="nucleotide sequence ID" value="NC_000913.3"/>
</dbReference>
<dbReference type="BioGRID" id="4260002">
    <property type="interactions" value="24"/>
</dbReference>
<dbReference type="DIP" id="DIP-11459N"/>
<dbReference type="FunCoup" id="P75829">
    <property type="interactions" value="79"/>
</dbReference>
<dbReference type="IntAct" id="P75829">
    <property type="interactions" value="48"/>
</dbReference>
<dbReference type="STRING" id="511145.b0877"/>
<dbReference type="jPOST" id="P75829"/>
<dbReference type="PaxDb" id="511145-b0877"/>
<dbReference type="EnsemblBacteria" id="AAC73964">
    <property type="protein sequence ID" value="AAC73964"/>
    <property type="gene ID" value="b0877"/>
</dbReference>
<dbReference type="GeneID" id="946025"/>
<dbReference type="KEGG" id="ecj:JW0861"/>
<dbReference type="KEGG" id="eco:b0877"/>
<dbReference type="KEGG" id="ecoc:C3026_05450"/>
<dbReference type="PATRIC" id="fig|511145.12.peg.906"/>
<dbReference type="EchoBASE" id="EB3457"/>
<dbReference type="eggNOG" id="COG2990">
    <property type="taxonomic scope" value="Bacteria"/>
</dbReference>
<dbReference type="HOGENOM" id="CLU_065818_1_0_6"/>
<dbReference type="InParanoid" id="P75829"/>
<dbReference type="OMA" id="ADYDSFW"/>
<dbReference type="PhylomeDB" id="P75829"/>
<dbReference type="BioCyc" id="EcoCyc:G6460-MONOMER"/>
<dbReference type="PHI-base" id="PHI:10177"/>
<dbReference type="PRO" id="PR:P75829"/>
<dbReference type="Proteomes" id="UP000000625">
    <property type="component" value="Chromosome"/>
</dbReference>
<dbReference type="GO" id="GO:0006974">
    <property type="term" value="P:DNA damage response"/>
    <property type="evidence" value="ECO:0000270"/>
    <property type="project" value="EcoliWiki"/>
</dbReference>
<dbReference type="InterPro" id="IPR007488">
    <property type="entry name" value="DUF535"/>
</dbReference>
<dbReference type="PANTHER" id="PTHR38785">
    <property type="entry name" value="HOMOLOG OF VIRK"/>
    <property type="match status" value="1"/>
</dbReference>
<dbReference type="PANTHER" id="PTHR38785:SF1">
    <property type="entry name" value="HOMOLOG OF VIRK"/>
    <property type="match status" value="1"/>
</dbReference>
<dbReference type="Pfam" id="PF04393">
    <property type="entry name" value="DUF535"/>
    <property type="match status" value="1"/>
</dbReference>
<proteinExistence type="predicted"/>
<protein>
    <recommendedName>
        <fullName>Uncharacterized protein YbjX</fullName>
    </recommendedName>
</protein>
<reference key="1">
    <citation type="journal article" date="1996" name="DNA Res.">
        <title>A 718-kb DNA sequence of the Escherichia coli K-12 genome corresponding to the 12.7-28.0 min region on the linkage map.</title>
        <authorList>
            <person name="Oshima T."/>
            <person name="Aiba H."/>
            <person name="Baba T."/>
            <person name="Fujita K."/>
            <person name="Hayashi K."/>
            <person name="Honjo A."/>
            <person name="Ikemoto K."/>
            <person name="Inada T."/>
            <person name="Itoh T."/>
            <person name="Kajihara M."/>
            <person name="Kanai K."/>
            <person name="Kashimoto K."/>
            <person name="Kimura S."/>
            <person name="Kitagawa M."/>
            <person name="Makino K."/>
            <person name="Masuda S."/>
            <person name="Miki T."/>
            <person name="Mizobuchi K."/>
            <person name="Mori H."/>
            <person name="Motomura K."/>
            <person name="Nakamura Y."/>
            <person name="Nashimoto H."/>
            <person name="Nishio Y."/>
            <person name="Saito N."/>
            <person name="Sampei G."/>
            <person name="Seki Y."/>
            <person name="Tagami H."/>
            <person name="Takemoto K."/>
            <person name="Wada C."/>
            <person name="Yamamoto Y."/>
            <person name="Yano M."/>
            <person name="Horiuchi T."/>
        </authorList>
    </citation>
    <scope>NUCLEOTIDE SEQUENCE [LARGE SCALE GENOMIC DNA]</scope>
    <source>
        <strain>K12 / W3110 / ATCC 27325 / DSM 5911</strain>
    </source>
</reference>
<reference key="2">
    <citation type="journal article" date="1997" name="Science">
        <title>The complete genome sequence of Escherichia coli K-12.</title>
        <authorList>
            <person name="Blattner F.R."/>
            <person name="Plunkett G. III"/>
            <person name="Bloch C.A."/>
            <person name="Perna N.T."/>
            <person name="Burland V."/>
            <person name="Riley M."/>
            <person name="Collado-Vides J."/>
            <person name="Glasner J.D."/>
            <person name="Rode C.K."/>
            <person name="Mayhew G.F."/>
            <person name="Gregor J."/>
            <person name="Davis N.W."/>
            <person name="Kirkpatrick H.A."/>
            <person name="Goeden M.A."/>
            <person name="Rose D.J."/>
            <person name="Mau B."/>
            <person name="Shao Y."/>
        </authorList>
    </citation>
    <scope>NUCLEOTIDE SEQUENCE [LARGE SCALE GENOMIC DNA]</scope>
    <source>
        <strain>K12 / MG1655 / ATCC 47076</strain>
    </source>
</reference>
<reference key="3">
    <citation type="journal article" date="2006" name="Mol. Syst. Biol.">
        <title>Highly accurate genome sequences of Escherichia coli K-12 strains MG1655 and W3110.</title>
        <authorList>
            <person name="Hayashi K."/>
            <person name="Morooka N."/>
            <person name="Yamamoto Y."/>
            <person name="Fujita K."/>
            <person name="Isono K."/>
            <person name="Choi S."/>
            <person name="Ohtsubo E."/>
            <person name="Baba T."/>
            <person name="Wanner B.L."/>
            <person name="Mori H."/>
            <person name="Horiuchi T."/>
        </authorList>
    </citation>
    <scope>NUCLEOTIDE SEQUENCE [LARGE SCALE GENOMIC DNA]</scope>
    <source>
        <strain>K12 / W3110 / ATCC 27325 / DSM 5911</strain>
    </source>
</reference>
<gene>
    <name type="primary">ybjX</name>
    <name type="ordered locus">b0877</name>
    <name type="ordered locus">JW0861</name>
</gene>
<evidence type="ECO:0000305" key="1"/>
<accession>P75829</accession>
<keyword id="KW-1185">Reference proteome</keyword>
<organism>
    <name type="scientific">Escherichia coli (strain K12)</name>
    <dbReference type="NCBI Taxonomy" id="83333"/>
    <lineage>
        <taxon>Bacteria</taxon>
        <taxon>Pseudomonadati</taxon>
        <taxon>Pseudomonadota</taxon>
        <taxon>Gammaproteobacteria</taxon>
        <taxon>Enterobacterales</taxon>
        <taxon>Enterobacteriaceae</taxon>
        <taxon>Escherichia</taxon>
    </lineage>
</organism>
<name>YBJX_ECOLI</name>
<sequence length="330" mass="38358">MVKSTPCITIDFMNMSQLTERTFTPSESLSSLSLFLSLARGQCRPGKFWHRRSFRQKFLLRSLIMPRLSVEWMNELSHWPNLNVLLTRQPRLPVRLHRPYLAANLSRKQLLEALRYHYALLRECMSAEEFSLYLNTPGLQLAKLEGKNGEQFTLELTMMISMDKEGDSTILFRNSEGIPLAEITFTLCEYQGKRTMFIGGLQGAKWEIPHQEIQNATKACHGLFPKRLVMEAACLFAQRLQVEQIIAVSNETHIYRSLRYRDKEGKIHADYNAFWESVGGVCDAERHYRLPAQIARKEIAEIASKKRAEYRRRYEMLDAIQPQMATMFRG</sequence>
<comment type="similarity">
    <text evidence="1">To H.influenzae HI_0461.</text>
</comment>